<dbReference type="EMBL" id="U41658">
    <property type="protein sequence ID" value="AAC49349.1"/>
    <property type="molecule type" value="mRNA"/>
</dbReference>
<dbReference type="EMBL" id="Z49480">
    <property type="protein sequence ID" value="CAA89500.1"/>
    <property type="molecule type" value="Genomic_DNA"/>
</dbReference>
<dbReference type="EMBL" id="Z49481">
    <property type="protein sequence ID" value="CAA89503.1"/>
    <property type="molecule type" value="Genomic_DNA"/>
</dbReference>
<dbReference type="EMBL" id="BK006943">
    <property type="protein sequence ID" value="DAA08605.1"/>
    <property type="molecule type" value="Genomic_DNA"/>
</dbReference>
<dbReference type="PIR" id="S61953">
    <property type="entry name" value="S61953"/>
</dbReference>
<dbReference type="RefSeq" id="NP_012330.1">
    <property type="nucleotide sequence ID" value="NM_001181639.1"/>
</dbReference>
<dbReference type="SMR" id="Q02820"/>
<dbReference type="BioGRID" id="33553">
    <property type="interactions" value="116"/>
</dbReference>
<dbReference type="FunCoup" id="Q02820">
    <property type="interactions" value="21"/>
</dbReference>
<dbReference type="IntAct" id="Q02820">
    <property type="interactions" value="1"/>
</dbReference>
<dbReference type="STRING" id="4932.YJL205C"/>
<dbReference type="TCDB" id="9.A.27.1.1">
    <property type="family name" value="the non-classical protein exporter (ncpe) family"/>
</dbReference>
<dbReference type="PaxDb" id="4932-YJL205C"/>
<dbReference type="PeptideAtlas" id="Q02820"/>
<dbReference type="EnsemblFungi" id="YJL205C_mRNA">
    <property type="protein sequence ID" value="YJL205C"/>
    <property type="gene ID" value="YJL205C"/>
</dbReference>
<dbReference type="GeneID" id="853225"/>
<dbReference type="KEGG" id="sce:YJL205C"/>
<dbReference type="AGR" id="SGD:S000003742"/>
<dbReference type="SGD" id="S000003742">
    <property type="gene designation" value="NCE101"/>
</dbReference>
<dbReference type="VEuPathDB" id="FungiDB:YJL205C"/>
<dbReference type="eggNOG" id="ENOG502SBQ0">
    <property type="taxonomic scope" value="Eukaryota"/>
</dbReference>
<dbReference type="HOGENOM" id="CLU_188578_1_0_1"/>
<dbReference type="InParanoid" id="Q02820"/>
<dbReference type="OMA" id="SYYAFEY"/>
<dbReference type="OrthoDB" id="2155101at2759"/>
<dbReference type="BioCyc" id="YEAST:G3O-31634-MONOMER"/>
<dbReference type="BioGRID-ORCS" id="853225">
    <property type="hits" value="0 hits in 10 CRISPR screens"/>
</dbReference>
<dbReference type="ChiTaRS" id="NCE101">
    <property type="organism name" value="yeast"/>
</dbReference>
<dbReference type="PRO" id="PR:Q02820"/>
<dbReference type="Proteomes" id="UP000002311">
    <property type="component" value="Chromosome X"/>
</dbReference>
<dbReference type="RNAct" id="Q02820">
    <property type="molecule type" value="protein"/>
</dbReference>
<dbReference type="GO" id="GO:0005829">
    <property type="term" value="C:cytosol"/>
    <property type="evidence" value="ECO:0007005"/>
    <property type="project" value="SGD"/>
</dbReference>
<dbReference type="GO" id="GO:0016020">
    <property type="term" value="C:membrane"/>
    <property type="evidence" value="ECO:0007669"/>
    <property type="project" value="UniProtKB-SubCell"/>
</dbReference>
<dbReference type="GO" id="GO:0009306">
    <property type="term" value="P:protein secretion"/>
    <property type="evidence" value="ECO:0000316"/>
    <property type="project" value="SGD"/>
</dbReference>
<dbReference type="InterPro" id="IPR024242">
    <property type="entry name" value="NCE101"/>
</dbReference>
<dbReference type="PANTHER" id="PTHR28011">
    <property type="entry name" value="NON-CLASSICAL EXPORT PROTEIN 1"/>
    <property type="match status" value="1"/>
</dbReference>
<dbReference type="PANTHER" id="PTHR28011:SF1">
    <property type="entry name" value="NON-CLASSICAL EXPORT PROTEIN 1"/>
    <property type="match status" value="1"/>
</dbReference>
<dbReference type="Pfam" id="PF11654">
    <property type="entry name" value="NCE101"/>
    <property type="match status" value="1"/>
</dbReference>
<reference key="1">
    <citation type="journal article" date="1996" name="J. Cell Biol.">
        <title>A new pathway for protein export in Saccharomyces cerevisiae.</title>
        <authorList>
            <person name="Cleves A.E."/>
            <person name="Cooper D.N.W."/>
            <person name="Barondes S.H."/>
            <person name="Kelly R.B."/>
        </authorList>
    </citation>
    <scope>NUCLEOTIDE SEQUENCE [MRNA]</scope>
    <scope>FUNCTION</scope>
    <source>
        <strain>ATCC 26109 / X2180</strain>
    </source>
</reference>
<reference key="2">
    <citation type="journal article" date="1994" name="Yeast">
        <title>The sequence of a 36 kb segment on the left arm of yeast chromosome X identifies 24 open reading frames including NUC1, PRP21 (SPP91), CDC6, CRY2, the gene for S24, a homologue to the aconitase gene ACO1 and two homologues to chromosome III genes.</title>
        <authorList>
            <person name="Purnelle B."/>
            <person name="Coster F."/>
            <person name="Goffeau A."/>
        </authorList>
    </citation>
    <scope>NUCLEOTIDE SEQUENCE [GENOMIC DNA]</scope>
    <source>
        <strain>ATCC 204508 / S288c</strain>
    </source>
</reference>
<reference key="3">
    <citation type="journal article" date="1996" name="EMBO J.">
        <title>Complete nucleotide sequence of Saccharomyces cerevisiae chromosome X.</title>
        <authorList>
            <person name="Galibert F."/>
            <person name="Alexandraki D."/>
            <person name="Baur A."/>
            <person name="Boles E."/>
            <person name="Chalwatzis N."/>
            <person name="Chuat J.-C."/>
            <person name="Coster F."/>
            <person name="Cziepluch C."/>
            <person name="de Haan M."/>
            <person name="Domdey H."/>
            <person name="Durand P."/>
            <person name="Entian K.-D."/>
            <person name="Gatius M."/>
            <person name="Goffeau A."/>
            <person name="Grivell L.A."/>
            <person name="Hennemann A."/>
            <person name="Herbert C.J."/>
            <person name="Heumann K."/>
            <person name="Hilger F."/>
            <person name="Hollenberg C.P."/>
            <person name="Huang M.-E."/>
            <person name="Jacq C."/>
            <person name="Jauniaux J.-C."/>
            <person name="Katsoulou C."/>
            <person name="Kirchrath L."/>
            <person name="Kleine K."/>
            <person name="Kordes E."/>
            <person name="Koetter P."/>
            <person name="Liebl S."/>
            <person name="Louis E.J."/>
            <person name="Manus V."/>
            <person name="Mewes H.-W."/>
            <person name="Miosga T."/>
            <person name="Obermaier B."/>
            <person name="Perea J."/>
            <person name="Pohl T.M."/>
            <person name="Portetelle D."/>
            <person name="Pujol A."/>
            <person name="Purnelle B."/>
            <person name="Ramezani Rad M."/>
            <person name="Rasmussen S.W."/>
            <person name="Rose M."/>
            <person name="Rossau R."/>
            <person name="Schaaff-Gerstenschlaeger I."/>
            <person name="Smits P.H.M."/>
            <person name="Scarcez T."/>
            <person name="Soriano N."/>
            <person name="To Van D."/>
            <person name="Tzermia M."/>
            <person name="Van Broekhoven A."/>
            <person name="Vandenbol M."/>
            <person name="Wedler H."/>
            <person name="von Wettstein D."/>
            <person name="Wambutt R."/>
            <person name="Zagulski M."/>
            <person name="Zollner A."/>
            <person name="Karpfinger-Hartl L."/>
        </authorList>
    </citation>
    <scope>NUCLEOTIDE SEQUENCE [LARGE SCALE GENOMIC DNA]</scope>
    <source>
        <strain>ATCC 204508 / S288c</strain>
    </source>
</reference>
<reference key="4">
    <citation type="journal article" date="2014" name="G3 (Bethesda)">
        <title>The reference genome sequence of Saccharomyces cerevisiae: Then and now.</title>
        <authorList>
            <person name="Engel S.R."/>
            <person name="Dietrich F.S."/>
            <person name="Fisk D.G."/>
            <person name="Binkley G."/>
            <person name="Balakrishnan R."/>
            <person name="Costanzo M.C."/>
            <person name="Dwight S.S."/>
            <person name="Hitz B.C."/>
            <person name="Karra K."/>
            <person name="Nash R.S."/>
            <person name="Weng S."/>
            <person name="Wong E.D."/>
            <person name="Lloyd P."/>
            <person name="Skrzypek M.S."/>
            <person name="Miyasato S.R."/>
            <person name="Simison M."/>
            <person name="Cherry J.M."/>
        </authorList>
    </citation>
    <scope>GENOME REANNOTATION</scope>
    <source>
        <strain>ATCC 204508 / S288c</strain>
    </source>
</reference>
<keyword id="KW-0472">Membrane</keyword>
<keyword id="KW-0653">Protein transport</keyword>
<keyword id="KW-1185">Reference proteome</keyword>
<keyword id="KW-0812">Transmembrane</keyword>
<keyword id="KW-1133">Transmembrane helix</keyword>
<keyword id="KW-0813">Transport</keyword>
<gene>
    <name type="primary">NCE101</name>
    <name type="synonym">NCE1</name>
    <name type="ordered locus">YJL205C</name>
    <name type="ORF">YJL205BC</name>
    <name type="ORF">YJL205C-A</name>
</gene>
<comment type="function">
    <text evidence="2">Involved in a novel pathway of export of proteins that lack a cleavable signal sequence. May be part of the export machinery or may also be a substrate for non-classical export.</text>
</comment>
<comment type="subcellular location">
    <subcellularLocation>
        <location evidence="3">Membrane</location>
        <topology evidence="3">Single-pass membrane protein</topology>
    </subcellularLocation>
</comment>
<comment type="similarity">
    <text evidence="3">Belongs to the NCE101 family.</text>
</comment>
<feature type="chain" id="PRO_0000096759" description="Non-classical export protein 1">
    <location>
        <begin position="1"/>
        <end position="53"/>
    </location>
</feature>
<feature type="transmembrane region" description="Helical" evidence="1">
    <location>
        <begin position="7"/>
        <end position="29"/>
    </location>
</feature>
<sequence>MVQYAPFLLGKFSDPLLAIMVGCLSYYVYERKMGRPQGHHLHELIKKRWDDRK</sequence>
<organism>
    <name type="scientific">Saccharomyces cerevisiae (strain ATCC 204508 / S288c)</name>
    <name type="common">Baker's yeast</name>
    <dbReference type="NCBI Taxonomy" id="559292"/>
    <lineage>
        <taxon>Eukaryota</taxon>
        <taxon>Fungi</taxon>
        <taxon>Dikarya</taxon>
        <taxon>Ascomycota</taxon>
        <taxon>Saccharomycotina</taxon>
        <taxon>Saccharomycetes</taxon>
        <taxon>Saccharomycetales</taxon>
        <taxon>Saccharomycetaceae</taxon>
        <taxon>Saccharomyces</taxon>
    </lineage>
</organism>
<evidence type="ECO:0000255" key="1"/>
<evidence type="ECO:0000269" key="2">
    <source>
    </source>
</evidence>
<evidence type="ECO:0000305" key="3"/>
<proteinExistence type="inferred from homology"/>
<protein>
    <recommendedName>
        <fullName>Non-classical export protein 1</fullName>
    </recommendedName>
</protein>
<name>NCE1_YEAST</name>
<accession>Q02820</accession>
<accession>D6VVY9</accession>
<accession>O00037</accession>
<accession>O00038</accession>